<feature type="chain" id="PRO_0000387454" description="tRNA1(Val) (adenine(37)-N6)-methyltransferase">
    <location>
        <begin position="1"/>
        <end position="248"/>
    </location>
</feature>
<accession>Q1C564</accession>
<gene>
    <name type="ordered locus">YPA_2443</name>
</gene>
<dbReference type="EC" id="2.1.1.223" evidence="1"/>
<dbReference type="EMBL" id="CP000308">
    <property type="protein sequence ID" value="ABG14408.1"/>
    <property type="molecule type" value="Genomic_DNA"/>
</dbReference>
<dbReference type="SMR" id="Q1C564"/>
<dbReference type="KEGG" id="ypa:YPA_2443"/>
<dbReference type="Proteomes" id="UP000001971">
    <property type="component" value="Chromosome"/>
</dbReference>
<dbReference type="GO" id="GO:0005737">
    <property type="term" value="C:cytoplasm"/>
    <property type="evidence" value="ECO:0007669"/>
    <property type="project" value="UniProtKB-SubCell"/>
</dbReference>
<dbReference type="GO" id="GO:0003676">
    <property type="term" value="F:nucleic acid binding"/>
    <property type="evidence" value="ECO:0007669"/>
    <property type="project" value="InterPro"/>
</dbReference>
<dbReference type="GO" id="GO:0016430">
    <property type="term" value="F:tRNA (adenine-N6)-methyltransferase activity"/>
    <property type="evidence" value="ECO:0007669"/>
    <property type="project" value="UniProtKB-UniRule"/>
</dbReference>
<dbReference type="GO" id="GO:0032259">
    <property type="term" value="P:methylation"/>
    <property type="evidence" value="ECO:0007669"/>
    <property type="project" value="UniProtKB-KW"/>
</dbReference>
<dbReference type="GO" id="GO:0008033">
    <property type="term" value="P:tRNA processing"/>
    <property type="evidence" value="ECO:0007669"/>
    <property type="project" value="UniProtKB-UniRule"/>
</dbReference>
<dbReference type="CDD" id="cd02440">
    <property type="entry name" value="AdoMet_MTases"/>
    <property type="match status" value="1"/>
</dbReference>
<dbReference type="Gene3D" id="3.40.50.150">
    <property type="entry name" value="Vaccinia Virus protein VP39"/>
    <property type="match status" value="1"/>
</dbReference>
<dbReference type="HAMAP" id="MF_01872">
    <property type="entry name" value="tRNA_methyltr_YfiC"/>
    <property type="match status" value="1"/>
</dbReference>
<dbReference type="InterPro" id="IPR002052">
    <property type="entry name" value="DNA_methylase_N6_adenine_CS"/>
</dbReference>
<dbReference type="InterPro" id="IPR029063">
    <property type="entry name" value="SAM-dependent_MTases_sf"/>
</dbReference>
<dbReference type="InterPro" id="IPR007848">
    <property type="entry name" value="Small_mtfrase_dom"/>
</dbReference>
<dbReference type="InterPro" id="IPR050210">
    <property type="entry name" value="tRNA_Adenine-N(6)_MTase"/>
</dbReference>
<dbReference type="InterPro" id="IPR022882">
    <property type="entry name" value="tRNA_adenine-N6_MeTrfase"/>
</dbReference>
<dbReference type="NCBIfam" id="NF047853">
    <property type="entry name" value="tRm6a37MtseTrmN"/>
    <property type="match status" value="1"/>
</dbReference>
<dbReference type="PANTHER" id="PTHR47739">
    <property type="entry name" value="TRNA1(VAL) (ADENINE(37)-N6)-METHYLTRANSFERASE"/>
    <property type="match status" value="1"/>
</dbReference>
<dbReference type="PANTHER" id="PTHR47739:SF1">
    <property type="entry name" value="TRNA1(VAL) (ADENINE(37)-N6)-METHYLTRANSFERASE"/>
    <property type="match status" value="1"/>
</dbReference>
<dbReference type="Pfam" id="PF05175">
    <property type="entry name" value="MTS"/>
    <property type="match status" value="1"/>
</dbReference>
<dbReference type="PRINTS" id="PR00507">
    <property type="entry name" value="N12N6MTFRASE"/>
</dbReference>
<dbReference type="SUPFAM" id="SSF53335">
    <property type="entry name" value="S-adenosyl-L-methionine-dependent methyltransferases"/>
    <property type="match status" value="1"/>
</dbReference>
<dbReference type="PROSITE" id="PS00092">
    <property type="entry name" value="N6_MTASE"/>
    <property type="match status" value="1"/>
</dbReference>
<organism>
    <name type="scientific">Yersinia pestis bv. Antiqua (strain Antiqua)</name>
    <dbReference type="NCBI Taxonomy" id="360102"/>
    <lineage>
        <taxon>Bacteria</taxon>
        <taxon>Pseudomonadati</taxon>
        <taxon>Pseudomonadota</taxon>
        <taxon>Gammaproteobacteria</taxon>
        <taxon>Enterobacterales</taxon>
        <taxon>Yersiniaceae</taxon>
        <taxon>Yersinia</taxon>
    </lineage>
</organism>
<keyword id="KW-0963">Cytoplasm</keyword>
<keyword id="KW-0489">Methyltransferase</keyword>
<keyword id="KW-0949">S-adenosyl-L-methionine</keyword>
<keyword id="KW-0808">Transferase</keyword>
<keyword id="KW-0819">tRNA processing</keyword>
<comment type="function">
    <text evidence="1">Specifically methylates the adenine in position 37 of tRNA(1)(Val) (anticodon cmo5UAC).</text>
</comment>
<comment type="catalytic activity">
    <reaction evidence="1">
        <text>adenosine(37) in tRNA1(Val) + S-adenosyl-L-methionine = N(6)-methyladenosine(37) in tRNA1(Val) + S-adenosyl-L-homocysteine + H(+)</text>
        <dbReference type="Rhea" id="RHEA:43160"/>
        <dbReference type="Rhea" id="RHEA-COMP:10369"/>
        <dbReference type="Rhea" id="RHEA-COMP:10370"/>
        <dbReference type="ChEBI" id="CHEBI:15378"/>
        <dbReference type="ChEBI" id="CHEBI:57856"/>
        <dbReference type="ChEBI" id="CHEBI:59789"/>
        <dbReference type="ChEBI" id="CHEBI:74411"/>
        <dbReference type="ChEBI" id="CHEBI:74449"/>
        <dbReference type="EC" id="2.1.1.223"/>
    </reaction>
</comment>
<comment type="subcellular location">
    <subcellularLocation>
        <location evidence="1">Cytoplasm</location>
    </subcellularLocation>
</comment>
<comment type="similarity">
    <text evidence="1">Belongs to the methyltransferase superfamily. tRNA (adenine-N(6)-)-methyltransferase family.</text>
</comment>
<reference key="1">
    <citation type="journal article" date="2006" name="J. Bacteriol.">
        <title>Complete genome sequence of Yersinia pestis strains Antiqua and Nepal516: evidence of gene reduction in an emerging pathogen.</title>
        <authorList>
            <person name="Chain P.S.G."/>
            <person name="Hu P."/>
            <person name="Malfatti S.A."/>
            <person name="Radnedge L."/>
            <person name="Larimer F."/>
            <person name="Vergez L.M."/>
            <person name="Worsham P."/>
            <person name="Chu M.C."/>
            <person name="Andersen G.L."/>
        </authorList>
    </citation>
    <scope>NUCLEOTIDE SEQUENCE [LARGE SCALE GENOMIC DNA]</scope>
    <source>
        <strain>Antiqua</strain>
    </source>
</reference>
<protein>
    <recommendedName>
        <fullName evidence="1">tRNA1(Val) (adenine(37)-N6)-methyltransferase</fullName>
        <ecNumber evidence="1">2.1.1.223</ecNumber>
    </recommendedName>
    <alternativeName>
        <fullName evidence="1">tRNA m6A37 methyltransferase</fullName>
    </alternativeName>
</protein>
<proteinExistence type="inferred from homology"/>
<name>TRMN6_YERPA</name>
<sequence length="248" mass="27761">MGEQLKKQPVLRGGGFTFKQFFVAHDRCAMKVGTDGVLLGAWVPVLHARRVLDIGCGSGLIALMIAQRSLPQVQIDGVELEPAAAQQASSNVELSPWAERIHIHQQDIHQFAENHPHQYDLIVSNPPYFAPAIACRDEARDTARYTGSLTHDALLNCAEKLITEDGMFCVVLPHELGIEFARLAGQQGWFVRCQVDIRDRPGKPLHRMLLTLSRQAGETVYQHLALRQSEGVYSPEFCQLISDFYLNY</sequence>
<evidence type="ECO:0000255" key="1">
    <source>
        <dbReference type="HAMAP-Rule" id="MF_01872"/>
    </source>
</evidence>